<comment type="function">
    <text evidence="4 12 13 14 15">Receptor that mediates peroxisomal import of proteins containing a C-terminal PTS1-type tripeptide peroxisomal targeting signal (SKL-type) (PubMed:14562106, PubMed:35768507, PubMed:7980572, PubMed:8265627). Binds to cargo proteins containing a PTS1 peroxisomal targeting signal in the cytosol, and translocates them into the peroxisome matrix by passing through the PEX13-PEX14 docking complex along with cargo proteins (PubMed:9094717). PEX5 receptor is then retrotranslocated into the cytosol, leading to release of bound cargo in the peroxisome matrix, and reset for a subsequent peroxisome import cycle (PubMed:35768507).</text>
</comment>
<comment type="subunit">
    <text evidence="10 15">Interacts (via WxxxF/Y and LVxEF motifs) with PEX14; promoting translocation through the PEX13-PEX14 docking complex.</text>
</comment>
<comment type="interaction">
    <interactant intactId="EBI-13170">
        <id>P35056</id>
    </interactant>
    <interactant intactId="EBI-13206">
        <id>P80667</id>
        <label>PEX13</label>
    </interactant>
    <organismsDiffer>false</organismsDiffer>
    <experiments>6</experiments>
</comment>
<comment type="interaction">
    <interactant intactId="EBI-13170">
        <id>P35056</id>
    </interactant>
    <interactant intactId="EBI-13212">
        <id>P53112</id>
        <label>PEX14</label>
    </interactant>
    <organismsDiffer>false</organismsDiffer>
    <experiments>9</experiments>
</comment>
<comment type="subcellular location">
    <subcellularLocation>
        <location evidence="5 8">Cytoplasm</location>
        <location evidence="5 8">Cytosol</location>
    </subcellularLocation>
    <subcellularLocation>
        <location evidence="5 7 8">Peroxisome matrix</location>
    </subcellularLocation>
    <text evidence="2 5 8 11">Cycles between the cytosol and the peroxisome matrix (PubMed:15283676, PubMed:17452527). Following binding to cargo proteins containing a PTS1 peroxisomal targeting signal in the cytosol, recruited to the docking complex, composed of PEX13 and PEX14, leading to translocation into the peroxisome matrix along with cargo proteins (PubMed:17452527). Export and recycling to the cytosol is initiated by binding to the PEX2-PEX10-PEX12 ligase complex via its unstructured N-terminus that inserts into the ligase pore and emerges in the cytosol (PubMed:17452527). Cys-6 of PEX5 is then monoubiquitinated, promoting its extraction from peroxisomal membrane by the PEX1-PEX6 AAA ATPase complex (PubMed:17452527). Extraction is accompanied by unfolding of the TPR repeats and release of bound cargo in the peroxisome matrix (By similarity). The TPR repeats refold in the cytosol and ubiquitination is removed by deubiquitinating enzyme UBP15, resetting PEX5 for a subsequent import cycle (PubMed:21665945).</text>
</comment>
<comment type="domain">
    <text evidence="1">The TPR repeats mediate interaction with proteins containing a C-terminal PTS1-type tripeptide peroxisomal targeting signal (SKL-type).</text>
</comment>
<comment type="domain">
    <text evidence="1">The WxxxF/Y motifs mediate interaction with PEX14, promoting association with the PEX13-PEX14 docking complex.</text>
</comment>
<comment type="domain">
    <text evidence="1">The amphipathic helix 1 and 2 (AH1 and AH2, respectively) are required for PEX5 retrotranslocation and recycling. AH2 mediates interaction with lumenal side of the PEX2-PEX10-PEX12 ligase complex, while AH1 is required for extraction from peroxisomal membrane by the PEX1-PEX6 AAA ATPase complex.</text>
</comment>
<comment type="PTM">
    <text evidence="5 6 7 8 9 11 12">Monoubiquitinated at Cys-6 by PEX2 during PEX5 passage through the retrotranslocation channel: monoubiquitination acts as a signal for PEX5 extraction and is required for proper export from peroxisomes and recycling (PubMed:15632140, PubMed:17452527, PubMed:35768507). Ubiquitination at Cys-6 is UBC4-independent but requires the presence of PEX4 (PubMed:17452527, PubMed:17550898). When PEX5 recycling is compromised, polyubiquitinated at Lys-18 and Lys-24 by PEX10 during its passage through the retrotranslocation channel, leading to its degradation (PubMed:15283676, PubMed:15536088, PubMed:17452527, PubMed:35768507). Ubiquitination at Lys-18 and Lys-24 are UBC4-dependent (PubMed:15283676, PubMed:15536088, PubMed:17550898). Monoubiquitination at Cys-6 and polyubiquitination at Lys-18 and Lys-24 are removed by UBP15 in the cytosol, resetting PEX5 for a subsequent import cycle (PubMed:21665945).</text>
</comment>
<comment type="miscellaneous">
    <text evidence="4">Present with 2070 molecules/cell in log phase SD medium.</text>
</comment>
<comment type="similarity">
    <text evidence="18">Belongs to the peroxisomal targeting signal receptor family.</text>
</comment>
<keyword id="KW-0007">Acetylation</keyword>
<keyword id="KW-0963">Cytoplasm</keyword>
<keyword id="KW-1017">Isopeptide bond</keyword>
<keyword id="KW-0576">Peroxisome</keyword>
<keyword id="KW-0597">Phosphoprotein</keyword>
<keyword id="KW-0653">Protein transport</keyword>
<keyword id="KW-1185">Reference proteome</keyword>
<keyword id="KW-0677">Repeat</keyword>
<keyword id="KW-0882">Thioester bond</keyword>
<keyword id="KW-0802">TPR repeat</keyword>
<keyword id="KW-0811">Translocation</keyword>
<keyword id="KW-0813">Transport</keyword>
<keyword id="KW-0832">Ubl conjugation</keyword>
<name>PEX5_YEAST</name>
<reference key="1">
    <citation type="journal article" date="1993" name="Proc. Natl. Acad. Sci. U.S.A.">
        <title>PAS10 is a tetratricopeptide-repeat protein that is essential for the import of most matrix proteins into peroxisomes of Saccharomyces cerevisiae.</title>
        <authorList>
            <person name="van der Leij I."/>
            <person name="Franse M.M."/>
            <person name="Elgersma Y."/>
            <person name="Distel B."/>
            <person name="Tabak H.F."/>
        </authorList>
    </citation>
    <scope>NUCLEOTIDE SEQUENCE [GENOMIC DNA]</scope>
    <scope>FUNCTION</scope>
</reference>
<reference key="2">
    <citation type="journal article" date="1997" name="Nature">
        <title>The nucleotide sequence of Saccharomyces cerevisiae chromosome IV.</title>
        <authorList>
            <person name="Jacq C."/>
            <person name="Alt-Moerbe J."/>
            <person name="Andre B."/>
            <person name="Arnold W."/>
            <person name="Bahr A."/>
            <person name="Ballesta J.P.G."/>
            <person name="Bargues M."/>
            <person name="Baron L."/>
            <person name="Becker A."/>
            <person name="Biteau N."/>
            <person name="Bloecker H."/>
            <person name="Blugeon C."/>
            <person name="Boskovic J."/>
            <person name="Brandt P."/>
            <person name="Brueckner M."/>
            <person name="Buitrago M.J."/>
            <person name="Coster F."/>
            <person name="Delaveau T."/>
            <person name="del Rey F."/>
            <person name="Dujon B."/>
            <person name="Eide L.G."/>
            <person name="Garcia-Cantalejo J.M."/>
            <person name="Goffeau A."/>
            <person name="Gomez-Peris A."/>
            <person name="Granotier C."/>
            <person name="Hanemann V."/>
            <person name="Hankeln T."/>
            <person name="Hoheisel J.D."/>
            <person name="Jaeger W."/>
            <person name="Jimenez A."/>
            <person name="Jonniaux J.-L."/>
            <person name="Kraemer C."/>
            <person name="Kuester H."/>
            <person name="Laamanen P."/>
            <person name="Legros Y."/>
            <person name="Louis E.J."/>
            <person name="Moeller-Rieker S."/>
            <person name="Monnet A."/>
            <person name="Moro M."/>
            <person name="Mueller-Auer S."/>
            <person name="Nussbaumer B."/>
            <person name="Paricio N."/>
            <person name="Paulin L."/>
            <person name="Perea J."/>
            <person name="Perez-Alonso M."/>
            <person name="Perez-Ortin J.E."/>
            <person name="Pohl T.M."/>
            <person name="Prydz H."/>
            <person name="Purnelle B."/>
            <person name="Rasmussen S.W."/>
            <person name="Remacha M.A."/>
            <person name="Revuelta J.L."/>
            <person name="Rieger M."/>
            <person name="Salom D."/>
            <person name="Saluz H.P."/>
            <person name="Saiz J.E."/>
            <person name="Saren A.-M."/>
            <person name="Schaefer M."/>
            <person name="Scharfe M."/>
            <person name="Schmidt E.R."/>
            <person name="Schneider C."/>
            <person name="Scholler P."/>
            <person name="Schwarz S."/>
            <person name="Soler-Mira A."/>
            <person name="Urrestarazu L.A."/>
            <person name="Verhasselt P."/>
            <person name="Vissers S."/>
            <person name="Voet M."/>
            <person name="Volckaert G."/>
            <person name="Wagner G."/>
            <person name="Wambutt R."/>
            <person name="Wedler E."/>
            <person name="Wedler H."/>
            <person name="Woelfl S."/>
            <person name="Harris D.E."/>
            <person name="Bowman S."/>
            <person name="Brown D."/>
            <person name="Churcher C.M."/>
            <person name="Connor R."/>
            <person name="Dedman K."/>
            <person name="Gentles S."/>
            <person name="Hamlin N."/>
            <person name="Hunt S."/>
            <person name="Jones L."/>
            <person name="McDonald S."/>
            <person name="Murphy L.D."/>
            <person name="Niblett D."/>
            <person name="Odell C."/>
            <person name="Oliver K."/>
            <person name="Rajandream M.A."/>
            <person name="Richards C."/>
            <person name="Shore L."/>
            <person name="Walsh S.V."/>
            <person name="Barrell B.G."/>
            <person name="Dietrich F.S."/>
            <person name="Mulligan J.T."/>
            <person name="Allen E."/>
            <person name="Araujo R."/>
            <person name="Aviles E."/>
            <person name="Berno A."/>
            <person name="Carpenter J."/>
            <person name="Chen E."/>
            <person name="Cherry J.M."/>
            <person name="Chung E."/>
            <person name="Duncan M."/>
            <person name="Hunicke-Smith S."/>
            <person name="Hyman R.W."/>
            <person name="Komp C."/>
            <person name="Lashkari D."/>
            <person name="Lew H."/>
            <person name="Lin D."/>
            <person name="Mosedale D."/>
            <person name="Nakahara K."/>
            <person name="Namath A."/>
            <person name="Oefner P."/>
            <person name="Oh C."/>
            <person name="Petel F.X."/>
            <person name="Roberts D."/>
            <person name="Schramm S."/>
            <person name="Schroeder M."/>
            <person name="Shogren T."/>
            <person name="Shroff N."/>
            <person name="Winant A."/>
            <person name="Yelton M.A."/>
            <person name="Botstein D."/>
            <person name="Davis R.W."/>
            <person name="Johnston M."/>
            <person name="Andrews S."/>
            <person name="Brinkman R."/>
            <person name="Cooper J."/>
            <person name="Ding H."/>
            <person name="Du Z."/>
            <person name="Favello A."/>
            <person name="Fulton L."/>
            <person name="Gattung S."/>
            <person name="Greco T."/>
            <person name="Hallsworth K."/>
            <person name="Hawkins J."/>
            <person name="Hillier L.W."/>
            <person name="Jier M."/>
            <person name="Johnson D."/>
            <person name="Johnston L."/>
            <person name="Kirsten J."/>
            <person name="Kucaba T."/>
            <person name="Langston Y."/>
            <person name="Latreille P."/>
            <person name="Le T."/>
            <person name="Mardis E."/>
            <person name="Menezes S."/>
            <person name="Miller N."/>
            <person name="Nhan M."/>
            <person name="Pauley A."/>
            <person name="Peluso D."/>
            <person name="Rifkin L."/>
            <person name="Riles L."/>
            <person name="Taich A."/>
            <person name="Trevaskis E."/>
            <person name="Vignati D."/>
            <person name="Wilcox L."/>
            <person name="Wohldman P."/>
            <person name="Vaudin M."/>
            <person name="Wilson R."/>
            <person name="Waterston R."/>
            <person name="Albermann K."/>
            <person name="Hani J."/>
            <person name="Heumann K."/>
            <person name="Kleine K."/>
            <person name="Mewes H.-W."/>
            <person name="Zollner A."/>
            <person name="Zaccaria P."/>
        </authorList>
    </citation>
    <scope>NUCLEOTIDE SEQUENCE [LARGE SCALE GENOMIC DNA]</scope>
    <source>
        <strain>ATCC 204508 / S288c</strain>
    </source>
</reference>
<reference key="3">
    <citation type="journal article" date="2014" name="G3 (Bethesda)">
        <title>The reference genome sequence of Saccharomyces cerevisiae: Then and now.</title>
        <authorList>
            <person name="Engel S.R."/>
            <person name="Dietrich F.S."/>
            <person name="Fisk D.G."/>
            <person name="Binkley G."/>
            <person name="Balakrishnan R."/>
            <person name="Costanzo M.C."/>
            <person name="Dwight S.S."/>
            <person name="Hitz B.C."/>
            <person name="Karra K."/>
            <person name="Nash R.S."/>
            <person name="Weng S."/>
            <person name="Wong E.D."/>
            <person name="Lloyd P."/>
            <person name="Skrzypek M.S."/>
            <person name="Miyasato S.R."/>
            <person name="Simison M."/>
            <person name="Cherry J.M."/>
        </authorList>
    </citation>
    <scope>GENOME REANNOTATION</scope>
    <source>
        <strain>ATCC 204508 / S288c</strain>
    </source>
</reference>
<reference key="4">
    <citation type="journal article" date="2007" name="Genome Res.">
        <title>Approaching a complete repository of sequence-verified protein-encoding clones for Saccharomyces cerevisiae.</title>
        <authorList>
            <person name="Hu Y."/>
            <person name="Rolfs A."/>
            <person name="Bhullar B."/>
            <person name="Murthy T.V.S."/>
            <person name="Zhu C."/>
            <person name="Berger M.F."/>
            <person name="Camargo A.A."/>
            <person name="Kelley F."/>
            <person name="McCarron S."/>
            <person name="Jepson D."/>
            <person name="Richardson A."/>
            <person name="Raphael J."/>
            <person name="Moreira D."/>
            <person name="Taycher E."/>
            <person name="Zuo D."/>
            <person name="Mohr S."/>
            <person name="Kane M.F."/>
            <person name="Williamson J."/>
            <person name="Simpson A.J.G."/>
            <person name="Bulyk M.L."/>
            <person name="Harlow E."/>
            <person name="Marsischky G."/>
            <person name="Kolodner R.D."/>
            <person name="LaBaer J."/>
        </authorList>
    </citation>
    <scope>NUCLEOTIDE SEQUENCE [GENOMIC DNA]</scope>
    <source>
        <strain>ATCC 204508 / S288c</strain>
    </source>
</reference>
<reference key="5">
    <citation type="journal article" date="1994" name="Biochem. Biophys. Res. Commun.">
        <title>The tetratricopeptide repeat-domain of the PAS10 protein of Saccharomyces cerevisiae is essential for binding the peroxisomal targeting signal-SKL.</title>
        <authorList>
            <person name="Brocard C."/>
            <person name="Kragler F."/>
            <person name="Simon M.M."/>
            <person name="Schuster T."/>
            <person name="Hartig A."/>
        </authorList>
    </citation>
    <scope>FUNCTION</scope>
</reference>
<reference key="6">
    <citation type="journal article" date="1997" name="Cell">
        <title>Pex14p, a peroxisomal membrane protein binding both receptors of the two PTS-dependent import pathways.</title>
        <authorList>
            <person name="Albertini M."/>
            <person name="Rehling P."/>
            <person name="Erdmann R."/>
            <person name="Girzalsky W."/>
            <person name="Kiel J.A.K.W."/>
            <person name="Veenhuis M."/>
            <person name="Kunau W.-H."/>
        </authorList>
    </citation>
    <scope>FUNCTION</scope>
    <scope>INTERACTION WITH PEX14</scope>
</reference>
<reference key="7">
    <citation type="journal article" date="2003" name="Nature">
        <title>Global analysis of protein expression in yeast.</title>
        <authorList>
            <person name="Ghaemmaghami S."/>
            <person name="Huh W.-K."/>
            <person name="Bower K."/>
            <person name="Howson R.W."/>
            <person name="Belle A."/>
            <person name="Dephoure N."/>
            <person name="O'Shea E.K."/>
            <person name="Weissman J.S."/>
        </authorList>
    </citation>
    <scope>LEVEL OF PROTEIN EXPRESSION [LARGE SCALE ANALYSIS]</scope>
</reference>
<reference key="8">
    <citation type="journal article" date="2004" name="Biochem. J.">
        <title>Ubiquitination of the peroxisomal import receptor Pex5p.</title>
        <authorList>
            <person name="Platta H.W."/>
            <person name="Girzalsky W."/>
            <person name="Erdmann R."/>
        </authorList>
    </citation>
    <scope>SUBCELLULAR LOCATION</scope>
    <scope>UBIQUITINATION</scope>
</reference>
<reference key="9">
    <citation type="journal article" date="2005" name="J. Biol. Chem.">
        <title>Ubiquitination of the peroxisomal targeting signal type 1 receptor, Pex5p, suggests the presence of a quality control mechanism during peroxisomal matrix protein import.</title>
        <authorList>
            <person name="Kiel J.A."/>
            <person name="Emmrich K."/>
            <person name="Meyer H.E."/>
            <person name="Kunau W.H."/>
        </authorList>
    </citation>
    <scope>UBIQUITINATION</scope>
</reference>
<reference key="10">
    <citation type="journal article" date="2005" name="J. Biol. Chem.">
        <title>The Saccharomyces cerevisiae peroxisomal import receptor Pex5p is monoubiquitinated in wild type cells.</title>
        <authorList>
            <person name="Kragt A."/>
            <person name="Voorn-Brouwer T."/>
            <person name="van den Berg M."/>
            <person name="Distel B."/>
        </authorList>
    </citation>
    <scope>UBIQUITINATION</scope>
    <scope>SUBCELLULAR LOCATION</scope>
</reference>
<reference key="11">
    <citation type="journal article" date="2007" name="J. Biol. Chem.">
        <title>A conserved cysteine is essential for Pex4p-dependent ubiquitination of the peroxisomal import receptor Pex5p.</title>
        <authorList>
            <person name="Williams C."/>
            <person name="van den Berg M."/>
            <person name="Sprenger R.R."/>
            <person name="Distel B."/>
        </authorList>
    </citation>
    <scope>ACETYLATION AT MET-1</scope>
    <scope>UBIQUITINATION AT CYS-6; LYS-18 AND LYS-24</scope>
    <scope>MUTAGENESIS OF CYS-6; LYS-18 AND LYS-24</scope>
    <scope>IDENTIFICATION BY MASS SPECTROMETRY</scope>
</reference>
<reference key="12">
    <citation type="journal article" date="2007" name="J. Cell Biol.">
        <title>Ubiquitination of the peroxisomal import receptor Pex5p is required for its recycling.</title>
        <authorList>
            <person name="Platta H.W."/>
            <person name="El Magraoui F."/>
            <person name="Schlee D."/>
            <person name="Grunau S."/>
            <person name="Girzalsky W."/>
            <person name="Erdmann R."/>
        </authorList>
    </citation>
    <scope>SUBCELLULAR LOCATION</scope>
    <scope>UBIQUITINATION</scope>
    <scope>MUTAGENESIS OF LYS-18 AND LYS-24</scope>
</reference>
<reference key="13">
    <citation type="journal article" date="2008" name="Mol. Cell. Proteomics">
        <title>A multidimensional chromatography technology for in-depth phosphoproteome analysis.</title>
        <authorList>
            <person name="Albuquerque C.P."/>
            <person name="Smolka M.B."/>
            <person name="Payne S.H."/>
            <person name="Bafna V."/>
            <person name="Eng J."/>
            <person name="Zhou H."/>
        </authorList>
    </citation>
    <scope>PHOSPHORYLATION [LARGE SCALE ANALYSIS] AT SER-61</scope>
    <scope>IDENTIFICATION BY MASS SPECTROMETRY [LARGE SCALE ANALYSIS]</scope>
</reference>
<reference key="14">
    <citation type="journal article" date="2010" name="Nat. Cell Biol.">
        <title>The peroxisomal importomer constitutes a large and highly dynamic pore.</title>
        <authorList>
            <person name="Meinecke M."/>
            <person name="Cizmowski C."/>
            <person name="Schliebs W."/>
            <person name="Krueger V."/>
            <person name="Beck S."/>
            <person name="Wagner R."/>
            <person name="Erdmann R."/>
        </authorList>
    </citation>
    <scope>INTERACTION WITH PEX14</scope>
</reference>
<reference key="15">
    <citation type="journal article" date="2011" name="J. Biol. Chem.">
        <title>Ubp15p, a ubiquitin hydrolase associated with the peroxisomal export machinery.</title>
        <authorList>
            <person name="Debelyy M.O."/>
            <person name="Platta H.W."/>
            <person name="Saffian D."/>
            <person name="Hensel A."/>
            <person name="Thoms S."/>
            <person name="Meyer H.E."/>
            <person name="Warscheid B."/>
            <person name="Girzalsky W."/>
            <person name="Erdmann R."/>
        </authorList>
    </citation>
    <scope>DEUBIQUITINATION</scope>
    <scope>SUBCELLULAR LOCATION</scope>
</reference>
<reference key="16">
    <citation type="journal article" date="2022" name="Nature">
        <title>A peroxisomal ubiquitin ligase complex forms a retrotranslocation channel.</title>
        <authorList>
            <person name="Feng P."/>
            <person name="Wu X."/>
            <person name="Erramilli S.K."/>
            <person name="Paulo J.A."/>
            <person name="Knejski P."/>
            <person name="Gygi S.P."/>
            <person name="Kossiakoff A.A."/>
            <person name="Rapoport T.A."/>
        </authorList>
    </citation>
    <scope>FUNCTION</scope>
    <scope>UBIQUITINATION AT CYS-6; LYS-18 AND LYS-24</scope>
    <scope>MUTAGENESIS OF CYS-6; LYS-18 AND LYS-24</scope>
</reference>
<sequence length="612" mass="69324">MDVGSCSVGNNPLAQLHKHTQQNKSLQFNQKNNGRLNESPLQGTNKPGISEAFISNVNAISQENMANMQRFINGEPLIDDKRRMEIGPSSGRLPPFSNVHSLQTSANPTQIKGVNDISHWSQEFQGSNSIQNRNADTGNSEKAWQRGSTTASSRFQYPNTMMNNYAYASMNSLSGSRLQSPAFMNQQQSGRSKEGVNEQEQQPWTDQFEKLEKEVSENLDINDEIEKEENVSEVEQNKPETVEKEEGVYGDQYQSDFQEVWDSIHKDAEEVLPSELVNDDLNLGEDYLKYLGGRVNGNIEYAFQSNNEYFNNPNAYKIGCLLMENGAKLSEAALAFEAAVKEKPDHVDAWLRLGLVQTQNEKELNGISALEECLKLDPKNLEAMKTLAISYINEGYDMSAFTMLDKWAETKYPEIWSRIKQQDDKFQKEKGFTHIDMNAHITKQFLQLANNLSTIDPEIQLCLGLLFYTKDDFDKTIDCFESALRVNPNDELMWNRLGASLANSNRSEEAIQAYHRALQLKPSFVRARYNLAVSSMNIGCFKEAAGYLLSVLSMHEVNTNNKKGDVGSLLNTYNDTVIETLKRVFIAMNRDDLLQEVKPGMDLKRFKGEFSF</sequence>
<evidence type="ECO:0000250" key="1">
    <source>
        <dbReference type="UniProtKB" id="A0A1L8FDW4"/>
    </source>
</evidence>
<evidence type="ECO:0000250" key="2">
    <source>
        <dbReference type="UniProtKB" id="P50542"/>
    </source>
</evidence>
<evidence type="ECO:0000256" key="3">
    <source>
        <dbReference type="SAM" id="MobiDB-lite"/>
    </source>
</evidence>
<evidence type="ECO:0000269" key="4">
    <source>
    </source>
</evidence>
<evidence type="ECO:0000269" key="5">
    <source>
    </source>
</evidence>
<evidence type="ECO:0000269" key="6">
    <source>
    </source>
</evidence>
<evidence type="ECO:0000269" key="7">
    <source>
    </source>
</evidence>
<evidence type="ECO:0000269" key="8">
    <source>
    </source>
</evidence>
<evidence type="ECO:0000269" key="9">
    <source>
    </source>
</evidence>
<evidence type="ECO:0000269" key="10">
    <source>
    </source>
</evidence>
<evidence type="ECO:0000269" key="11">
    <source>
    </source>
</evidence>
<evidence type="ECO:0000269" key="12">
    <source>
    </source>
</evidence>
<evidence type="ECO:0000269" key="13">
    <source>
    </source>
</evidence>
<evidence type="ECO:0000269" key="14">
    <source>
    </source>
</evidence>
<evidence type="ECO:0000269" key="15">
    <source>
    </source>
</evidence>
<evidence type="ECO:0000303" key="16">
    <source>
    </source>
</evidence>
<evidence type="ECO:0000303" key="17">
    <source>
    </source>
</evidence>
<evidence type="ECO:0000305" key="18"/>
<evidence type="ECO:0000312" key="19">
    <source>
        <dbReference type="SGD" id="S000002652"/>
    </source>
</evidence>
<evidence type="ECO:0007744" key="20">
    <source>
    </source>
</evidence>
<proteinExistence type="evidence at protein level"/>
<accession>P35056</accession>
<accession>D6VSM4</accession>
<dbReference type="EMBL" id="L23076">
    <property type="protein sequence ID" value="AAA64794.1"/>
    <property type="molecule type" value="Genomic_DNA"/>
</dbReference>
<dbReference type="EMBL" id="Z49701">
    <property type="protein sequence ID" value="CAA89730.1"/>
    <property type="molecule type" value="Genomic_DNA"/>
</dbReference>
<dbReference type="EMBL" id="AY723785">
    <property type="protein sequence ID" value="AAU09702.1"/>
    <property type="molecule type" value="Genomic_DNA"/>
</dbReference>
<dbReference type="EMBL" id="BK006938">
    <property type="protein sequence ID" value="DAA12084.1"/>
    <property type="molecule type" value="Genomic_DNA"/>
</dbReference>
<dbReference type="PIR" id="A49403">
    <property type="entry name" value="A49403"/>
</dbReference>
<dbReference type="RefSeq" id="NP_010530.1">
    <property type="nucleotide sequence ID" value="NM_001180552.1"/>
</dbReference>
<dbReference type="SMR" id="P35056"/>
<dbReference type="BioGRID" id="32295">
    <property type="interactions" value="243"/>
</dbReference>
<dbReference type="DIP" id="DIP-2475N"/>
<dbReference type="ELM" id="P35056"/>
<dbReference type="FunCoup" id="P35056">
    <property type="interactions" value="141"/>
</dbReference>
<dbReference type="IntAct" id="P35056">
    <property type="interactions" value="20"/>
</dbReference>
<dbReference type="MINT" id="P35056"/>
<dbReference type="STRING" id="4932.YDR244W"/>
<dbReference type="TCDB" id="3.A.20.1.5">
    <property type="family name" value="the peroxisomal protein importer (ppi) family"/>
</dbReference>
<dbReference type="iPTMnet" id="P35056"/>
<dbReference type="PaxDb" id="4932-YDR244W"/>
<dbReference type="PeptideAtlas" id="P35056"/>
<dbReference type="EnsemblFungi" id="YDR244W_mRNA">
    <property type="protein sequence ID" value="YDR244W"/>
    <property type="gene ID" value="YDR244W"/>
</dbReference>
<dbReference type="GeneID" id="851831"/>
<dbReference type="KEGG" id="sce:YDR244W"/>
<dbReference type="AGR" id="SGD:S000002652"/>
<dbReference type="SGD" id="S000002652">
    <property type="gene designation" value="PEX5"/>
</dbReference>
<dbReference type="VEuPathDB" id="FungiDB:YDR244W"/>
<dbReference type="eggNOG" id="KOG1125">
    <property type="taxonomic scope" value="Eukaryota"/>
</dbReference>
<dbReference type="GeneTree" id="ENSGT00940000169247"/>
<dbReference type="HOGENOM" id="CLU_013516_3_0_1"/>
<dbReference type="InParanoid" id="P35056"/>
<dbReference type="OMA" id="WEEQFKQ"/>
<dbReference type="OrthoDB" id="10006023at2759"/>
<dbReference type="BioCyc" id="YEAST:G3O-29817-MONOMER"/>
<dbReference type="Reactome" id="R-SCE-8866654">
    <property type="pathway name" value="E3 ubiquitin ligases ubiquitinate target proteins"/>
</dbReference>
<dbReference type="Reactome" id="R-SCE-9033241">
    <property type="pathway name" value="Peroxisomal protein import"/>
</dbReference>
<dbReference type="Reactome" id="R-SCE-9664873">
    <property type="pathway name" value="Pexophagy"/>
</dbReference>
<dbReference type="BioGRID-ORCS" id="851831">
    <property type="hits" value="0 hits in 10 CRISPR screens"/>
</dbReference>
<dbReference type="PRO" id="PR:P35056"/>
<dbReference type="Proteomes" id="UP000002311">
    <property type="component" value="Chromosome IV"/>
</dbReference>
<dbReference type="RNAct" id="P35056">
    <property type="molecule type" value="protein"/>
</dbReference>
<dbReference type="GO" id="GO:0005829">
    <property type="term" value="C:cytosol"/>
    <property type="evidence" value="ECO:0000314"/>
    <property type="project" value="UniProtKB"/>
</dbReference>
<dbReference type="GO" id="GO:1990429">
    <property type="term" value="C:peroxisomal importomer complex"/>
    <property type="evidence" value="ECO:0000314"/>
    <property type="project" value="SGD"/>
</dbReference>
<dbReference type="GO" id="GO:0005782">
    <property type="term" value="C:peroxisomal matrix"/>
    <property type="evidence" value="ECO:0000314"/>
    <property type="project" value="UniProtKB"/>
</dbReference>
<dbReference type="GO" id="GO:0005778">
    <property type="term" value="C:peroxisomal membrane"/>
    <property type="evidence" value="ECO:0000314"/>
    <property type="project" value="SGD"/>
</dbReference>
<dbReference type="GO" id="GO:0005777">
    <property type="term" value="C:peroxisome"/>
    <property type="evidence" value="ECO:0000314"/>
    <property type="project" value="SGD"/>
</dbReference>
<dbReference type="GO" id="GO:0005052">
    <property type="term" value="F:peroxisome matrix targeting signal-1 binding"/>
    <property type="evidence" value="ECO:0000314"/>
    <property type="project" value="UniProt"/>
</dbReference>
<dbReference type="GO" id="GO:0140597">
    <property type="term" value="F:protein carrier chaperone"/>
    <property type="evidence" value="ECO:0000314"/>
    <property type="project" value="UniProtKB"/>
</dbReference>
<dbReference type="GO" id="GO:0030674">
    <property type="term" value="F:protein-macromolecule adaptor activity"/>
    <property type="evidence" value="ECO:0000353"/>
    <property type="project" value="SGD"/>
</dbReference>
<dbReference type="GO" id="GO:0016558">
    <property type="term" value="P:protein import into peroxisome matrix"/>
    <property type="evidence" value="ECO:0000314"/>
    <property type="project" value="UniProtKB"/>
</dbReference>
<dbReference type="GO" id="GO:0016560">
    <property type="term" value="P:protein import into peroxisome matrix, docking"/>
    <property type="evidence" value="ECO:0000315"/>
    <property type="project" value="SGD"/>
</dbReference>
<dbReference type="FunFam" id="1.25.40.10:FF:000218">
    <property type="entry name" value="Peroxisomal targeting signal receptor"/>
    <property type="match status" value="1"/>
</dbReference>
<dbReference type="Gene3D" id="1.25.40.10">
    <property type="entry name" value="Tetratricopeptide repeat domain"/>
    <property type="match status" value="1"/>
</dbReference>
<dbReference type="InterPro" id="IPR024111">
    <property type="entry name" value="PEX5/PEX5L"/>
</dbReference>
<dbReference type="InterPro" id="IPR011990">
    <property type="entry name" value="TPR-like_helical_dom_sf"/>
</dbReference>
<dbReference type="InterPro" id="IPR019734">
    <property type="entry name" value="TPR_rpt"/>
</dbReference>
<dbReference type="PANTHER" id="PTHR10130:SF0">
    <property type="entry name" value="GH08708P"/>
    <property type="match status" value="1"/>
</dbReference>
<dbReference type="PANTHER" id="PTHR10130">
    <property type="entry name" value="PEROXISOMAL TARGETING SIGNAL 1 RECEPTOR PEX5"/>
    <property type="match status" value="1"/>
</dbReference>
<dbReference type="Pfam" id="PF00515">
    <property type="entry name" value="TPR_1"/>
    <property type="match status" value="1"/>
</dbReference>
<dbReference type="Pfam" id="PF13432">
    <property type="entry name" value="TPR_16"/>
    <property type="match status" value="1"/>
</dbReference>
<dbReference type="SMART" id="SM00028">
    <property type="entry name" value="TPR"/>
    <property type="match status" value="4"/>
</dbReference>
<dbReference type="SUPFAM" id="SSF48452">
    <property type="entry name" value="TPR-like"/>
    <property type="match status" value="1"/>
</dbReference>
<dbReference type="PROSITE" id="PS50005">
    <property type="entry name" value="TPR"/>
    <property type="match status" value="4"/>
</dbReference>
<dbReference type="PROSITE" id="PS50293">
    <property type="entry name" value="TPR_REGION"/>
    <property type="match status" value="1"/>
</dbReference>
<protein>
    <recommendedName>
        <fullName evidence="18">Peroxisomal targeting signal receptor</fullName>
        <shortName>PTS1 receptor</shortName>
        <shortName>PTS1R</shortName>
    </recommendedName>
    <alternativeName>
        <fullName evidence="18">Peroxin-5</fullName>
    </alternativeName>
</protein>
<organism>
    <name type="scientific">Saccharomyces cerevisiae (strain ATCC 204508 / S288c)</name>
    <name type="common">Baker's yeast</name>
    <dbReference type="NCBI Taxonomy" id="559292"/>
    <lineage>
        <taxon>Eukaryota</taxon>
        <taxon>Fungi</taxon>
        <taxon>Dikarya</taxon>
        <taxon>Ascomycota</taxon>
        <taxon>Saccharomycotina</taxon>
        <taxon>Saccharomycetes</taxon>
        <taxon>Saccharomycetales</taxon>
        <taxon>Saccharomycetaceae</taxon>
        <taxon>Saccharomyces</taxon>
    </lineage>
</organism>
<feature type="chain" id="PRO_0000106316" description="Peroxisomal targeting signal receptor">
    <location>
        <begin position="1"/>
        <end position="612"/>
    </location>
</feature>
<feature type="repeat" description="TPR 1">
    <location>
        <begin position="64"/>
        <end position="97"/>
    </location>
</feature>
<feature type="repeat" description="TPR 2">
    <location>
        <begin position="313"/>
        <end position="346"/>
    </location>
</feature>
<feature type="repeat" description="TPR 3">
    <location>
        <begin position="347"/>
        <end position="380"/>
    </location>
</feature>
<feature type="repeat" description="TPR 4">
    <location>
        <begin position="381"/>
        <end position="418"/>
    </location>
</feature>
<feature type="repeat" description="TPR 5">
    <location>
        <begin position="419"/>
        <end position="456"/>
    </location>
</feature>
<feature type="repeat" description="TPR 6">
    <location>
        <begin position="457"/>
        <end position="490"/>
    </location>
</feature>
<feature type="repeat" description="TPR 7">
    <location>
        <begin position="491"/>
        <end position="524"/>
    </location>
</feature>
<feature type="repeat" description="TPR 8">
    <location>
        <begin position="525"/>
        <end position="558"/>
    </location>
</feature>
<feature type="region of interest" description="Disordered" evidence="3">
    <location>
        <begin position="1"/>
        <end position="24"/>
    </location>
</feature>
<feature type="region of interest" description="Amphipathic helix 1 (AH1)" evidence="1">
    <location>
        <begin position="7"/>
        <end position="29"/>
    </location>
</feature>
<feature type="region of interest" description="Amphipathic helix 2 (AH2)" evidence="1">
    <location>
        <begin position="70"/>
        <end position="104"/>
    </location>
</feature>
<feature type="region of interest" description="Disordered" evidence="3">
    <location>
        <begin position="129"/>
        <end position="151"/>
    </location>
</feature>
<feature type="region of interest" description="Amphipathic helix 3 (AH3)" evidence="1">
    <location>
        <begin position="158"/>
        <end position="174"/>
    </location>
</feature>
<feature type="region of interest" description="Disordered" evidence="3">
    <location>
        <begin position="182"/>
        <end position="202"/>
    </location>
</feature>
<feature type="region of interest" description="Amphipathic helix 4 (AH4)" evidence="1">
    <location>
        <begin position="257"/>
        <end position="273"/>
    </location>
</feature>
<feature type="short sequence motif" description="WxxxF/Y motif 1" evidence="1">
    <location>
        <begin position="120"/>
        <end position="124"/>
    </location>
</feature>
<feature type="short sequence motif" description="WxxxF/Y motif 2" evidence="1">
    <location>
        <begin position="204"/>
        <end position="208"/>
    </location>
</feature>
<feature type="modified residue" description="N-acetylmethionine" evidence="9">
    <location>
        <position position="1"/>
    </location>
</feature>
<feature type="modified residue" description="Phosphoserine" evidence="20">
    <location>
        <position position="61"/>
    </location>
</feature>
<feature type="cross-link" description="Glycyl cysteine thioester (Cys-Gly) (interchain with G-Cter in ubiquitin)" evidence="9 12">
    <location>
        <position position="6"/>
    </location>
</feature>
<feature type="cross-link" description="Glycyl lysine isopeptide (Lys-Gly) (interchain with G-Cter in ubiquitin)" evidence="9 12">
    <location>
        <position position="18"/>
    </location>
</feature>
<feature type="cross-link" description="Glycyl lysine isopeptide (Lys-Gly) (interchain with G-Cter in ubiquitin)" evidence="9 12">
    <location>
        <position position="24"/>
    </location>
</feature>
<feature type="mutagenesis site" description="Abolished monoubiquitination by PEX2, promoting polyubiquitination by PEX10 and degradation. Loss of UBE2D2-independent ubiquitination. Abolished monoubiquitination by PEX2 and polyubiquitination by PEX10, leading to impaired protein import in peroxisomes; when associated with R-18 and R-24." evidence="9 12">
    <original>C</original>
    <variation>R</variation>
    <location>
        <position position="6"/>
    </location>
</feature>
<feature type="mutagenesis site" description="Loss of UBE2D2-dependent ubiquitination. No effect on its function. Abolished monoubiquitination by PEX2 and polyubiquitination by PEX10, leading to impaired protein import in peroxisomes; when associated with A-6 and R-24." evidence="8 9 12">
    <original>K</original>
    <variation>R</variation>
    <location>
        <position position="18"/>
    </location>
</feature>
<feature type="mutagenesis site" description="Loss of UBE2D2-dependent ubiquitination. No effect on its function. Abolished monoubiquitination by PEX2 and polyubiquitination by PEX10, leading to impaired protein import in peroxisomes; when associated with A-6 and R-18." evidence="8 9 12">
    <original>K</original>
    <variation>R</variation>
    <location>
        <position position="24"/>
    </location>
</feature>
<gene>
    <name evidence="16 19" type="primary">PEX5</name>
    <name evidence="17" type="synonym">PAS10</name>
    <name type="ordered locus">YDR244W</name>
    <name type="ORF">YD8419.11</name>
</gene>